<name>DNAA_GEOSL</name>
<protein>
    <recommendedName>
        <fullName evidence="1">Chromosomal replication initiator protein DnaA</fullName>
    </recommendedName>
</protein>
<gene>
    <name evidence="1" type="primary">dnaA</name>
    <name type="ordered locus">GSU0000.1</name>
</gene>
<sequence>MEEVWLQAQSNLAKVLTHQTFNTWIEPIKYLGSKKNVLLLEAPNQFVRDRVSESYLPMILESVQSLTDSQTKIELLIAKPKTEKPKQPAASEVTAAEPEACSGPDHSTNLNPKYTFDTFVCGGSNQFAHAAAQSVANSPAGKYNPLFIYGGVGLGKTHLLNAIGNHVLSVNRKARICFYTSEKFMNELINCLRYQKMDQFRNKFRKMDILLIDDIQFIAGKERTQEEFFHTFNSLYESHKQIVVTSDKFPKDIPGLEERLRSRFEWGLIADIQAPDTETKVAILRKKADADHISLPDDVALFLASSSTTNVRELEGMLIRLGAVSSLTGKNITLDMAREVLKDIIVDKSKEITVEMIQKFVAEHFSLKVADLKSDKRLKALVIPRQIAIFLCRDLTKSSYPEIGERFGGKDHSTIIHSVKKVEKLLSQDFELRNTVDTLRKGLLS</sequence>
<keyword id="KW-0067">ATP-binding</keyword>
<keyword id="KW-0963">Cytoplasm</keyword>
<keyword id="KW-0235">DNA replication</keyword>
<keyword id="KW-0238">DNA-binding</keyword>
<keyword id="KW-0446">Lipid-binding</keyword>
<keyword id="KW-0547">Nucleotide-binding</keyword>
<keyword id="KW-1185">Reference proteome</keyword>
<organism>
    <name type="scientific">Geobacter sulfurreducens (strain ATCC 51573 / DSM 12127 / PCA)</name>
    <dbReference type="NCBI Taxonomy" id="243231"/>
    <lineage>
        <taxon>Bacteria</taxon>
        <taxon>Pseudomonadati</taxon>
        <taxon>Thermodesulfobacteriota</taxon>
        <taxon>Desulfuromonadia</taxon>
        <taxon>Geobacterales</taxon>
        <taxon>Geobacteraceae</taxon>
        <taxon>Geobacter</taxon>
    </lineage>
</organism>
<reference key="1">
    <citation type="journal article" date="2003" name="Science">
        <title>Genome of Geobacter sulfurreducens: metal reduction in subsurface environments.</title>
        <authorList>
            <person name="Methe B.A."/>
            <person name="Nelson K.E."/>
            <person name="Eisen J.A."/>
            <person name="Paulsen I.T."/>
            <person name="Nelson W.C."/>
            <person name="Heidelberg J.F."/>
            <person name="Wu D."/>
            <person name="Wu M."/>
            <person name="Ward N.L."/>
            <person name="Beanan M.J."/>
            <person name="Dodson R.J."/>
            <person name="Madupu R."/>
            <person name="Brinkac L.M."/>
            <person name="Daugherty S.C."/>
            <person name="DeBoy R.T."/>
            <person name="Durkin A.S."/>
            <person name="Gwinn M.L."/>
            <person name="Kolonay J.F."/>
            <person name="Sullivan S.A."/>
            <person name="Haft D.H."/>
            <person name="Selengut J."/>
            <person name="Davidsen T.M."/>
            <person name="Zafar N."/>
            <person name="White O."/>
            <person name="Tran B."/>
            <person name="Romero C."/>
            <person name="Forberger H.A."/>
            <person name="Weidman J.F."/>
            <person name="Khouri H.M."/>
            <person name="Feldblyum T.V."/>
            <person name="Utterback T.R."/>
            <person name="Van Aken S.E."/>
            <person name="Lovley D.R."/>
            <person name="Fraser C.M."/>
        </authorList>
    </citation>
    <scope>NUCLEOTIDE SEQUENCE [LARGE SCALE GENOMIC DNA]</scope>
    <source>
        <strain>ATCC 51573 / DSM 12127 / PCA</strain>
    </source>
</reference>
<accession>Q74GG6</accession>
<evidence type="ECO:0000255" key="1">
    <source>
        <dbReference type="HAMAP-Rule" id="MF_00377"/>
    </source>
</evidence>
<evidence type="ECO:0000256" key="2">
    <source>
        <dbReference type="SAM" id="MobiDB-lite"/>
    </source>
</evidence>
<feature type="chain" id="PRO_0000114182" description="Chromosomal replication initiator protein DnaA">
    <location>
        <begin position="1"/>
        <end position="445"/>
    </location>
</feature>
<feature type="region of interest" description="Domain I, interacts with DnaA modulators" evidence="1">
    <location>
        <begin position="1"/>
        <end position="71"/>
    </location>
</feature>
<feature type="region of interest" description="Domain II" evidence="1">
    <location>
        <begin position="71"/>
        <end position="108"/>
    </location>
</feature>
<feature type="region of interest" description="Disordered" evidence="2">
    <location>
        <begin position="83"/>
        <end position="106"/>
    </location>
</feature>
<feature type="region of interest" description="Domain III, AAA+ region" evidence="1">
    <location>
        <begin position="109"/>
        <end position="325"/>
    </location>
</feature>
<feature type="region of interest" description="Domain IV, binds dsDNA" evidence="1">
    <location>
        <begin position="326"/>
        <end position="445"/>
    </location>
</feature>
<feature type="binding site" evidence="1">
    <location>
        <position position="153"/>
    </location>
    <ligand>
        <name>ATP</name>
        <dbReference type="ChEBI" id="CHEBI:30616"/>
    </ligand>
</feature>
<feature type="binding site" evidence="1">
    <location>
        <position position="155"/>
    </location>
    <ligand>
        <name>ATP</name>
        <dbReference type="ChEBI" id="CHEBI:30616"/>
    </ligand>
</feature>
<feature type="binding site" evidence="1">
    <location>
        <position position="156"/>
    </location>
    <ligand>
        <name>ATP</name>
        <dbReference type="ChEBI" id="CHEBI:30616"/>
    </ligand>
</feature>
<feature type="binding site" evidence="1">
    <location>
        <position position="157"/>
    </location>
    <ligand>
        <name>ATP</name>
        <dbReference type="ChEBI" id="CHEBI:30616"/>
    </ligand>
</feature>
<dbReference type="EMBL" id="AE017180">
    <property type="protein sequence ID" value="AAR99581.1"/>
    <property type="molecule type" value="Genomic_DNA"/>
</dbReference>
<dbReference type="RefSeq" id="WP_010940678.1">
    <property type="nucleotide sequence ID" value="NC_002939.5"/>
</dbReference>
<dbReference type="RefSeq" id="YP_016331.1">
    <property type="nucleotide sequence ID" value="NC_002939.5"/>
</dbReference>
<dbReference type="SMR" id="Q74GG6"/>
<dbReference type="FunCoup" id="Q74GG6">
    <property type="interactions" value="372"/>
</dbReference>
<dbReference type="STRING" id="243231.GSU0000.1"/>
<dbReference type="EnsemblBacteria" id="AAR99581">
    <property type="protein sequence ID" value="AAR99581"/>
    <property type="gene ID" value="GSU0000.1"/>
</dbReference>
<dbReference type="KEGG" id="gsu:GSU0000.1"/>
<dbReference type="PATRIC" id="fig|243231.5.peg.1"/>
<dbReference type="eggNOG" id="COG0593">
    <property type="taxonomic scope" value="Bacteria"/>
</dbReference>
<dbReference type="HOGENOM" id="CLU_026910_3_1_7"/>
<dbReference type="InParanoid" id="Q74GG6"/>
<dbReference type="OrthoDB" id="9807019at2"/>
<dbReference type="Proteomes" id="UP000000577">
    <property type="component" value="Chromosome"/>
</dbReference>
<dbReference type="GO" id="GO:0005737">
    <property type="term" value="C:cytoplasm"/>
    <property type="evidence" value="ECO:0007669"/>
    <property type="project" value="UniProtKB-SubCell"/>
</dbReference>
<dbReference type="GO" id="GO:0005886">
    <property type="term" value="C:plasma membrane"/>
    <property type="evidence" value="ECO:0000318"/>
    <property type="project" value="GO_Central"/>
</dbReference>
<dbReference type="GO" id="GO:0005524">
    <property type="term" value="F:ATP binding"/>
    <property type="evidence" value="ECO:0007669"/>
    <property type="project" value="UniProtKB-UniRule"/>
</dbReference>
<dbReference type="GO" id="GO:0016887">
    <property type="term" value="F:ATP hydrolysis activity"/>
    <property type="evidence" value="ECO:0007669"/>
    <property type="project" value="InterPro"/>
</dbReference>
<dbReference type="GO" id="GO:0003688">
    <property type="term" value="F:DNA replication origin binding"/>
    <property type="evidence" value="ECO:0000318"/>
    <property type="project" value="GO_Central"/>
</dbReference>
<dbReference type="GO" id="GO:0008289">
    <property type="term" value="F:lipid binding"/>
    <property type="evidence" value="ECO:0007669"/>
    <property type="project" value="UniProtKB-KW"/>
</dbReference>
<dbReference type="GO" id="GO:0006260">
    <property type="term" value="P:DNA replication"/>
    <property type="evidence" value="ECO:0000318"/>
    <property type="project" value="GO_Central"/>
</dbReference>
<dbReference type="GO" id="GO:0006270">
    <property type="term" value="P:DNA replication initiation"/>
    <property type="evidence" value="ECO:0000318"/>
    <property type="project" value="GO_Central"/>
</dbReference>
<dbReference type="GO" id="GO:0006275">
    <property type="term" value="P:regulation of DNA replication"/>
    <property type="evidence" value="ECO:0007669"/>
    <property type="project" value="UniProtKB-UniRule"/>
</dbReference>
<dbReference type="CDD" id="cd00009">
    <property type="entry name" value="AAA"/>
    <property type="match status" value="1"/>
</dbReference>
<dbReference type="CDD" id="cd06571">
    <property type="entry name" value="Bac_DnaA_C"/>
    <property type="match status" value="1"/>
</dbReference>
<dbReference type="FunFam" id="1.10.1750.10:FF:000002">
    <property type="entry name" value="Chromosomal replication initiator protein DnaA"/>
    <property type="match status" value="1"/>
</dbReference>
<dbReference type="FunFam" id="1.10.8.60:FF:000003">
    <property type="entry name" value="Chromosomal replication initiator protein DnaA"/>
    <property type="match status" value="1"/>
</dbReference>
<dbReference type="FunFam" id="3.40.50.300:FF:000150">
    <property type="entry name" value="Chromosomal replication initiator protein DnaA"/>
    <property type="match status" value="1"/>
</dbReference>
<dbReference type="Gene3D" id="1.10.1750.10">
    <property type="match status" value="1"/>
</dbReference>
<dbReference type="Gene3D" id="1.10.8.60">
    <property type="match status" value="1"/>
</dbReference>
<dbReference type="Gene3D" id="3.30.300.180">
    <property type="match status" value="1"/>
</dbReference>
<dbReference type="Gene3D" id="3.40.50.300">
    <property type="entry name" value="P-loop containing nucleotide triphosphate hydrolases"/>
    <property type="match status" value="1"/>
</dbReference>
<dbReference type="HAMAP" id="MF_00377">
    <property type="entry name" value="DnaA_bact"/>
    <property type="match status" value="1"/>
</dbReference>
<dbReference type="InterPro" id="IPR003593">
    <property type="entry name" value="AAA+_ATPase"/>
</dbReference>
<dbReference type="InterPro" id="IPR001957">
    <property type="entry name" value="Chromosome_initiator_DnaA"/>
</dbReference>
<dbReference type="InterPro" id="IPR020591">
    <property type="entry name" value="Chromosome_initiator_DnaA-like"/>
</dbReference>
<dbReference type="InterPro" id="IPR018312">
    <property type="entry name" value="Chromosome_initiator_DnaA_CS"/>
</dbReference>
<dbReference type="InterPro" id="IPR013159">
    <property type="entry name" value="DnaA_C"/>
</dbReference>
<dbReference type="InterPro" id="IPR013317">
    <property type="entry name" value="DnaA_dom"/>
</dbReference>
<dbReference type="InterPro" id="IPR024633">
    <property type="entry name" value="DnaA_N_dom"/>
</dbReference>
<dbReference type="InterPro" id="IPR038454">
    <property type="entry name" value="DnaA_N_sf"/>
</dbReference>
<dbReference type="InterPro" id="IPR027417">
    <property type="entry name" value="P-loop_NTPase"/>
</dbReference>
<dbReference type="InterPro" id="IPR010921">
    <property type="entry name" value="Trp_repressor/repl_initiator"/>
</dbReference>
<dbReference type="NCBIfam" id="TIGR00362">
    <property type="entry name" value="DnaA"/>
    <property type="match status" value="1"/>
</dbReference>
<dbReference type="PANTHER" id="PTHR30050">
    <property type="entry name" value="CHROMOSOMAL REPLICATION INITIATOR PROTEIN DNAA"/>
    <property type="match status" value="1"/>
</dbReference>
<dbReference type="PANTHER" id="PTHR30050:SF2">
    <property type="entry name" value="CHROMOSOMAL REPLICATION INITIATOR PROTEIN DNAA"/>
    <property type="match status" value="1"/>
</dbReference>
<dbReference type="Pfam" id="PF00308">
    <property type="entry name" value="Bac_DnaA"/>
    <property type="match status" value="1"/>
</dbReference>
<dbReference type="Pfam" id="PF08299">
    <property type="entry name" value="Bac_DnaA_C"/>
    <property type="match status" value="1"/>
</dbReference>
<dbReference type="Pfam" id="PF11638">
    <property type="entry name" value="DnaA_N"/>
    <property type="match status" value="1"/>
</dbReference>
<dbReference type="PRINTS" id="PR00051">
    <property type="entry name" value="DNAA"/>
</dbReference>
<dbReference type="SMART" id="SM00382">
    <property type="entry name" value="AAA"/>
    <property type="match status" value="1"/>
</dbReference>
<dbReference type="SMART" id="SM00760">
    <property type="entry name" value="Bac_DnaA_C"/>
    <property type="match status" value="1"/>
</dbReference>
<dbReference type="SUPFAM" id="SSF52540">
    <property type="entry name" value="P-loop containing nucleoside triphosphate hydrolases"/>
    <property type="match status" value="1"/>
</dbReference>
<dbReference type="SUPFAM" id="SSF48295">
    <property type="entry name" value="TrpR-like"/>
    <property type="match status" value="1"/>
</dbReference>
<dbReference type="PROSITE" id="PS01008">
    <property type="entry name" value="DNAA"/>
    <property type="match status" value="1"/>
</dbReference>
<proteinExistence type="inferred from homology"/>
<comment type="function">
    <text evidence="1">Plays an essential role in the initiation and regulation of chromosomal replication. ATP-DnaA binds to the origin of replication (oriC) to initiate formation of the DNA replication initiation complex once per cell cycle. Binds the DnaA box (a 9 base pair repeat at the origin) and separates the double-stranded (ds)DNA. Forms a right-handed helical filament on oriC DNA; dsDNA binds to the exterior of the filament while single-stranded (ss)DNA is stabiized in the filament's interior. The ATP-DnaA-oriC complex binds and stabilizes one strand of the AT-rich DNA unwinding element (DUE), permitting loading of DNA polymerase. After initiation quickly degrades to an ADP-DnaA complex that is not apt for DNA replication. Binds acidic phospholipids.</text>
</comment>
<comment type="subunit">
    <text evidence="1">Oligomerizes as a right-handed, spiral filament on DNA at oriC.</text>
</comment>
<comment type="subcellular location">
    <subcellularLocation>
        <location evidence="1">Cytoplasm</location>
    </subcellularLocation>
</comment>
<comment type="domain">
    <text evidence="1">Domain I is involved in oligomerization and binding regulators, domain II is flexibile and of varying length in different bacteria, domain III forms the AAA+ region, while domain IV binds dsDNA.</text>
</comment>
<comment type="similarity">
    <text evidence="1">Belongs to the DnaA family.</text>
</comment>